<organism>
    <name type="scientific">Helicobacter pylori (strain J99 / ATCC 700824)</name>
    <name type="common">Campylobacter pylori J99</name>
    <dbReference type="NCBI Taxonomy" id="85963"/>
    <lineage>
        <taxon>Bacteria</taxon>
        <taxon>Pseudomonadati</taxon>
        <taxon>Campylobacterota</taxon>
        <taxon>Epsilonproteobacteria</taxon>
        <taxon>Campylobacterales</taxon>
        <taxon>Helicobacteraceae</taxon>
        <taxon>Helicobacter</taxon>
    </lineage>
</organism>
<accession>P69997</accession>
<accession>P14917</accession>
<evidence type="ECO:0000250" key="1"/>
<evidence type="ECO:0000255" key="2">
    <source>
        <dbReference type="HAMAP-Rule" id="MF_01953"/>
    </source>
</evidence>
<evidence type="ECO:0000305" key="3"/>
<keyword id="KW-0963">Cytoplasm</keyword>
<keyword id="KW-0378">Hydrolase</keyword>
<keyword id="KW-0479">Metal-binding</keyword>
<keyword id="KW-0533">Nickel</keyword>
<reference key="1">
    <citation type="journal article" date="1999" name="Nature">
        <title>Genomic sequence comparison of two unrelated isolates of the human gastric pathogen Helicobacter pylori.</title>
        <authorList>
            <person name="Alm R.A."/>
            <person name="Ling L.-S.L."/>
            <person name="Moir D.T."/>
            <person name="King B.L."/>
            <person name="Brown E.D."/>
            <person name="Doig P.C."/>
            <person name="Smith D.R."/>
            <person name="Noonan B."/>
            <person name="Guild B.C."/>
            <person name="deJonge B.L."/>
            <person name="Carmel G."/>
            <person name="Tummino P.J."/>
            <person name="Caruso A."/>
            <person name="Uria-Nickelsen M."/>
            <person name="Mills D.M."/>
            <person name="Ives C."/>
            <person name="Gibson R."/>
            <person name="Merberg D."/>
            <person name="Mills S.D."/>
            <person name="Jiang Q."/>
            <person name="Taylor D.E."/>
            <person name="Vovis G.F."/>
            <person name="Trust T.J."/>
        </authorList>
    </citation>
    <scope>NUCLEOTIDE SEQUENCE [LARGE SCALE GENOMIC DNA]</scope>
    <source>
        <strain>J99 / ATCC 700824</strain>
    </source>
</reference>
<sequence length="569" mass="61684">MKKISRKEYVSMYGPTTGDKVRLGDTDLIAEVEHDYTIYGEELKFGGGKTLREGMSQSNNPSKEELDLIITNALIVDYTGIYKADIGIKDGKIAGIGKGGNKDMQDGVKNNLSVGPATEALAGEGLIVTAGGIDTHIHFISPQQIPTAFASGVTTMIGGGTGPADGTNATTITPGRRNLKWMLRAAEEYSMNLGFLAKGNASNDASLADQIEAGAIGFKIHEDWGTTPSAINHALDVADKYDVQVAIHTDTLNEAGCVEDTMAAIAGRTMHTFHTEGAGGGHAPDIIKVAGEHNILPASTNPTIPFTVNTEAEHMDMLMVCHHLDKSIKEDVQFADSRIRPQTIAAEDTLHDMGIFSITSSDSQAMGRVGEVITRTWQTADKNKKEFGRLKEEKGDNDNFRIKRYLSKYTINPAIAHGISEYVGSVEVGKVADLVLWSPAFFGVKPNMIIKGGFIALSQMGDANASIPTPQPVYYREMFAHHGKAKYDANITFVSQAAYDKGIKEELGLERQVLPVKNCRNITKKDMQFNDTTAHIEVNPETYHVFVDGKEVTSKPANKVSLAQLFSIF</sequence>
<gene>
    <name evidence="2" type="primary">ureB</name>
    <name type="synonym">hpuB</name>
    <name type="ordered locus">jhp_0067</name>
</gene>
<comment type="function">
    <text evidence="1">Ammonia produced by ureolysis increases the gastric pH thereby providing an environment permissive for colonization of the stomach.</text>
</comment>
<comment type="catalytic activity">
    <reaction evidence="2">
        <text>urea + 2 H2O + H(+) = hydrogencarbonate + 2 NH4(+)</text>
        <dbReference type="Rhea" id="RHEA:20557"/>
        <dbReference type="ChEBI" id="CHEBI:15377"/>
        <dbReference type="ChEBI" id="CHEBI:15378"/>
        <dbReference type="ChEBI" id="CHEBI:16199"/>
        <dbReference type="ChEBI" id="CHEBI:17544"/>
        <dbReference type="ChEBI" id="CHEBI:28938"/>
        <dbReference type="EC" id="3.5.1.5"/>
    </reaction>
</comment>
<comment type="cofactor">
    <cofactor evidence="2">
        <name>Ni cation</name>
        <dbReference type="ChEBI" id="CHEBI:25516"/>
    </cofactor>
    <text evidence="2">Binds 2 nickel ions per subunit.</text>
</comment>
<comment type="pathway">
    <text evidence="2">Nitrogen metabolism; urea degradation; CO(2) and NH(3) from urea (urease route): step 1/1.</text>
</comment>
<comment type="subunit">
    <text evidence="2">Heterohexamer of 3 UreA (alpha) and 3 UreB (beta) subunits. Four heterohexamers assemble to form a 16 nm dodecameric complex (By similarity).</text>
</comment>
<comment type="subcellular location">
    <subcellularLocation>
        <location>Cytoplasm</location>
    </subcellularLocation>
    <text evidence="1">Also associates with the outer membrane upon autolysis of neighboring bacteria.</text>
</comment>
<comment type="PTM">
    <text evidence="2">Carboxylation allows a single lysine to coordinate two nickel ions.</text>
</comment>
<comment type="miscellaneous">
    <text evidence="1">The novel dodecameric structure of the enzyme may allow it to remain active at the cell surface at acidic gastric pH. Within this dodecameric structure the 12 active sites are clustered within the interior of the proteinaceous shell. This may allow a high local concentration of ammonia within the enzyme which may protect the nickel-chelating groups from protonation (By similarity).</text>
</comment>
<comment type="similarity">
    <text evidence="2">Belongs to the metallo-dependent hydrolases superfamily. Urease alpha subunit family.</text>
</comment>
<comment type="caution">
    <text evidence="3">The orthologous protein is known as the alpha subunit (UreC) in most other bacteria.</text>
</comment>
<name>URE1_HELPJ</name>
<protein>
    <recommendedName>
        <fullName evidence="2">Urease subunit beta</fullName>
        <ecNumber evidence="2">3.5.1.5</ecNumber>
    </recommendedName>
    <alternativeName>
        <fullName evidence="2">Urea amidohydrolase subunit beta</fullName>
    </alternativeName>
</protein>
<feature type="chain" id="PRO_0000067534" description="Urease subunit beta">
    <location>
        <begin position="1"/>
        <end position="569"/>
    </location>
</feature>
<feature type="domain" description="Urease" evidence="2">
    <location>
        <begin position="131"/>
        <end position="569"/>
    </location>
</feature>
<feature type="active site" description="Proton donor" evidence="2">
    <location>
        <position position="322"/>
    </location>
</feature>
<feature type="binding site" evidence="2">
    <location>
        <position position="136"/>
    </location>
    <ligand>
        <name>Ni(2+)</name>
        <dbReference type="ChEBI" id="CHEBI:49786"/>
        <label>1</label>
    </ligand>
</feature>
<feature type="binding site" evidence="2">
    <location>
        <position position="138"/>
    </location>
    <ligand>
        <name>Ni(2+)</name>
        <dbReference type="ChEBI" id="CHEBI:49786"/>
        <label>1</label>
    </ligand>
</feature>
<feature type="binding site" description="via carbamate group" evidence="2">
    <location>
        <position position="219"/>
    </location>
    <ligand>
        <name>Ni(2+)</name>
        <dbReference type="ChEBI" id="CHEBI:49786"/>
        <label>1</label>
    </ligand>
</feature>
<feature type="binding site" description="via carbamate group" evidence="2">
    <location>
        <position position="219"/>
    </location>
    <ligand>
        <name>Ni(2+)</name>
        <dbReference type="ChEBI" id="CHEBI:49786"/>
        <label>2</label>
    </ligand>
</feature>
<feature type="binding site" evidence="2">
    <location>
        <position position="221"/>
    </location>
    <ligand>
        <name>substrate</name>
    </ligand>
</feature>
<feature type="binding site" evidence="2">
    <location>
        <position position="248"/>
    </location>
    <ligand>
        <name>Ni(2+)</name>
        <dbReference type="ChEBI" id="CHEBI:49786"/>
        <label>2</label>
    </ligand>
</feature>
<feature type="binding site" evidence="2">
    <location>
        <position position="274"/>
    </location>
    <ligand>
        <name>Ni(2+)</name>
        <dbReference type="ChEBI" id="CHEBI:49786"/>
        <label>2</label>
    </ligand>
</feature>
<feature type="binding site" evidence="2">
    <location>
        <position position="362"/>
    </location>
    <ligand>
        <name>Ni(2+)</name>
        <dbReference type="ChEBI" id="CHEBI:49786"/>
        <label>1</label>
    </ligand>
</feature>
<feature type="modified residue" description="N6-carboxylysine" evidence="2">
    <location>
        <position position="219"/>
    </location>
</feature>
<dbReference type="EC" id="3.5.1.5" evidence="2"/>
<dbReference type="EMBL" id="AE001439">
    <property type="protein sequence ID" value="AAD05651.1"/>
    <property type="molecule type" value="Genomic_DNA"/>
</dbReference>
<dbReference type="PIR" id="B38537">
    <property type="entry name" value="URKCBP"/>
</dbReference>
<dbReference type="RefSeq" id="WP_000724295.1">
    <property type="nucleotide sequence ID" value="NZ_CP011330.1"/>
</dbReference>
<dbReference type="SMR" id="P69997"/>
<dbReference type="IntAct" id="P69997">
    <property type="interactions" value="1"/>
</dbReference>
<dbReference type="BindingDB" id="P69997"/>
<dbReference type="MEROPS" id="M38.982"/>
<dbReference type="ABCD" id="P69997">
    <property type="antibodies" value="1 sequenced antibody"/>
</dbReference>
<dbReference type="KEGG" id="hpj:jhp_0067"/>
<dbReference type="PATRIC" id="fig|85963.30.peg.967"/>
<dbReference type="eggNOG" id="COG0804">
    <property type="taxonomic scope" value="Bacteria"/>
</dbReference>
<dbReference type="UniPathway" id="UPA00258">
    <property type="reaction ID" value="UER00370"/>
</dbReference>
<dbReference type="Proteomes" id="UP000000804">
    <property type="component" value="Chromosome"/>
</dbReference>
<dbReference type="GO" id="GO:0005737">
    <property type="term" value="C:cytoplasm"/>
    <property type="evidence" value="ECO:0007669"/>
    <property type="project" value="UniProtKB-SubCell"/>
</dbReference>
<dbReference type="GO" id="GO:0016151">
    <property type="term" value="F:nickel cation binding"/>
    <property type="evidence" value="ECO:0007669"/>
    <property type="project" value="UniProtKB-UniRule"/>
</dbReference>
<dbReference type="GO" id="GO:0009039">
    <property type="term" value="F:urease activity"/>
    <property type="evidence" value="ECO:0007669"/>
    <property type="project" value="UniProtKB-UniRule"/>
</dbReference>
<dbReference type="GO" id="GO:0043419">
    <property type="term" value="P:urea catabolic process"/>
    <property type="evidence" value="ECO:0007669"/>
    <property type="project" value="UniProtKB-UniRule"/>
</dbReference>
<dbReference type="CDD" id="cd00375">
    <property type="entry name" value="Urease_alpha"/>
    <property type="match status" value="1"/>
</dbReference>
<dbReference type="Gene3D" id="3.20.20.140">
    <property type="entry name" value="Metal-dependent hydrolases"/>
    <property type="match status" value="1"/>
</dbReference>
<dbReference type="Gene3D" id="2.30.40.10">
    <property type="entry name" value="Urease, subunit C, domain 1"/>
    <property type="match status" value="1"/>
</dbReference>
<dbReference type="HAMAP" id="MF_01953">
    <property type="entry name" value="Urease_alpha"/>
    <property type="match status" value="1"/>
</dbReference>
<dbReference type="InterPro" id="IPR006680">
    <property type="entry name" value="Amidohydro-rel"/>
</dbReference>
<dbReference type="InterPro" id="IPR011059">
    <property type="entry name" value="Metal-dep_hydrolase_composite"/>
</dbReference>
<dbReference type="InterPro" id="IPR032466">
    <property type="entry name" value="Metal_Hydrolase"/>
</dbReference>
<dbReference type="InterPro" id="IPR011612">
    <property type="entry name" value="Urease_alpha_N_dom"/>
</dbReference>
<dbReference type="InterPro" id="IPR050112">
    <property type="entry name" value="Urease_alpha_subunit"/>
</dbReference>
<dbReference type="InterPro" id="IPR017950">
    <property type="entry name" value="Urease_AS"/>
</dbReference>
<dbReference type="InterPro" id="IPR005848">
    <property type="entry name" value="Urease_asu"/>
</dbReference>
<dbReference type="InterPro" id="IPR017951">
    <property type="entry name" value="Urease_asu_c"/>
</dbReference>
<dbReference type="InterPro" id="IPR029754">
    <property type="entry name" value="Urease_Ni-bd"/>
</dbReference>
<dbReference type="NCBIfam" id="NF009686">
    <property type="entry name" value="PRK13207.1"/>
    <property type="match status" value="1"/>
</dbReference>
<dbReference type="NCBIfam" id="NF010591">
    <property type="entry name" value="PRK13985.1"/>
    <property type="match status" value="1"/>
</dbReference>
<dbReference type="NCBIfam" id="TIGR01792">
    <property type="entry name" value="urease_alph"/>
    <property type="match status" value="1"/>
</dbReference>
<dbReference type="PANTHER" id="PTHR43440">
    <property type="entry name" value="UREASE"/>
    <property type="match status" value="1"/>
</dbReference>
<dbReference type="PANTHER" id="PTHR43440:SF1">
    <property type="entry name" value="UREASE"/>
    <property type="match status" value="1"/>
</dbReference>
<dbReference type="Pfam" id="PF01979">
    <property type="entry name" value="Amidohydro_1"/>
    <property type="match status" value="1"/>
</dbReference>
<dbReference type="Pfam" id="PF00449">
    <property type="entry name" value="Urease_alpha"/>
    <property type="match status" value="1"/>
</dbReference>
<dbReference type="PRINTS" id="PR01752">
    <property type="entry name" value="UREASE"/>
</dbReference>
<dbReference type="SUPFAM" id="SSF51338">
    <property type="entry name" value="Composite domain of metallo-dependent hydrolases"/>
    <property type="match status" value="2"/>
</dbReference>
<dbReference type="SUPFAM" id="SSF51556">
    <property type="entry name" value="Metallo-dependent hydrolases"/>
    <property type="match status" value="1"/>
</dbReference>
<dbReference type="PROSITE" id="PS01120">
    <property type="entry name" value="UREASE_1"/>
    <property type="match status" value="1"/>
</dbReference>
<dbReference type="PROSITE" id="PS00145">
    <property type="entry name" value="UREASE_2"/>
    <property type="match status" value="1"/>
</dbReference>
<dbReference type="PROSITE" id="PS51368">
    <property type="entry name" value="UREASE_3"/>
    <property type="match status" value="1"/>
</dbReference>
<proteinExistence type="inferred from homology"/>